<evidence type="ECO:0000250" key="1"/>
<evidence type="ECO:0000269" key="2">
    <source>
    </source>
</evidence>
<evidence type="ECO:0000269" key="3">
    <source>
    </source>
</evidence>
<evidence type="ECO:0000305" key="4"/>
<keyword id="KW-0963">Cytoplasm</keyword>
<keyword id="KW-0479">Metal-binding</keyword>
<keyword id="KW-0648">Protein biosynthesis</keyword>
<keyword id="KW-0862">Zinc</keyword>
<gene>
    <name type="primary">alaXM</name>
    <name type="synonym">alaX</name>
    <name type="ordered locus">MM_0233</name>
</gene>
<proteinExistence type="evidence at protein level"/>
<name>ALAXM_METMA</name>
<feature type="chain" id="PRO_0000391647" description="Alanyl-tRNA editing protein AlaX-M">
    <location>
        <begin position="1"/>
        <end position="251"/>
    </location>
</feature>
<feature type="binding site" evidence="1">
    <location>
        <position position="107"/>
    </location>
    <ligand>
        <name>Zn(2+)</name>
        <dbReference type="ChEBI" id="CHEBI:29105"/>
    </ligand>
</feature>
<feature type="binding site" evidence="1">
    <location>
        <position position="111"/>
    </location>
    <ligand>
        <name>Zn(2+)</name>
        <dbReference type="ChEBI" id="CHEBI:29105"/>
    </ligand>
</feature>
<feature type="binding site" evidence="1">
    <location>
        <position position="210"/>
    </location>
    <ligand>
        <name>Zn(2+)</name>
        <dbReference type="ChEBI" id="CHEBI:29105"/>
    </ligand>
</feature>
<feature type="binding site" evidence="1">
    <location>
        <position position="214"/>
    </location>
    <ligand>
        <name>Zn(2+)</name>
        <dbReference type="ChEBI" id="CHEBI:29105"/>
    </ligand>
</feature>
<feature type="mutagenesis site" description="No removal of mischarged Ser from Ser-tRNA(Ala)." evidence="2">
    <original>KGK</original>
    <variation>AGA</variation>
    <location>
        <begin position="232"/>
        <end position="234"/>
    </location>
</feature>
<feature type="mutagenesis site" description="Severe reduction in removal of mischarged Ser from Ser-tRNA(Ala)." evidence="3">
    <original>K</original>
    <variation>A</variation>
    <location>
        <position position="232"/>
    </location>
</feature>
<feature type="mutagenesis site" description="Modest reduction in removal of mischarged Ser from Ser-tRNA(Ala)." evidence="3">
    <original>K</original>
    <variation>A</variation>
    <location>
        <position position="234"/>
    </location>
</feature>
<organism>
    <name type="scientific">Methanosarcina mazei (strain ATCC BAA-159 / DSM 3647 / Goe1 / Go1 / JCM 11833 / OCM 88)</name>
    <name type="common">Methanosarcina frisia</name>
    <dbReference type="NCBI Taxonomy" id="192952"/>
    <lineage>
        <taxon>Archaea</taxon>
        <taxon>Methanobacteriati</taxon>
        <taxon>Methanobacteriota</taxon>
        <taxon>Stenosarchaea group</taxon>
        <taxon>Methanomicrobia</taxon>
        <taxon>Methanosarcinales</taxon>
        <taxon>Methanosarcinaceae</taxon>
        <taxon>Methanosarcina</taxon>
    </lineage>
</organism>
<dbReference type="EMBL" id="AE008384">
    <property type="protein sequence ID" value="AAM29929.1"/>
    <property type="status" value="ALT_INIT"/>
    <property type="molecule type" value="Genomic_DNA"/>
</dbReference>
<dbReference type="RefSeq" id="WP_048037132.1">
    <property type="nucleotide sequence ID" value="NC_003901.1"/>
</dbReference>
<dbReference type="SMR" id="Q8Q0A4"/>
<dbReference type="GeneID" id="82159230"/>
<dbReference type="KEGG" id="mma:MM_0233"/>
<dbReference type="PATRIC" id="fig|192952.21.peg.284"/>
<dbReference type="eggNOG" id="arCOG01254">
    <property type="taxonomic scope" value="Archaea"/>
</dbReference>
<dbReference type="HOGENOM" id="CLU_004485_3_2_2"/>
<dbReference type="Proteomes" id="UP000000595">
    <property type="component" value="Chromosome"/>
</dbReference>
<dbReference type="GO" id="GO:0005737">
    <property type="term" value="C:cytoplasm"/>
    <property type="evidence" value="ECO:0007669"/>
    <property type="project" value="UniProtKB-SubCell"/>
</dbReference>
<dbReference type="GO" id="GO:0004813">
    <property type="term" value="F:alanine-tRNA ligase activity"/>
    <property type="evidence" value="ECO:0007669"/>
    <property type="project" value="InterPro"/>
</dbReference>
<dbReference type="GO" id="GO:0002161">
    <property type="term" value="F:aminoacyl-tRNA deacylase activity"/>
    <property type="evidence" value="ECO:0000315"/>
    <property type="project" value="UniProtKB"/>
</dbReference>
<dbReference type="GO" id="GO:0005524">
    <property type="term" value="F:ATP binding"/>
    <property type="evidence" value="ECO:0007669"/>
    <property type="project" value="InterPro"/>
</dbReference>
<dbReference type="GO" id="GO:0046872">
    <property type="term" value="F:metal ion binding"/>
    <property type="evidence" value="ECO:0007669"/>
    <property type="project" value="UniProtKB-KW"/>
</dbReference>
<dbReference type="GO" id="GO:0003676">
    <property type="term" value="F:nucleic acid binding"/>
    <property type="evidence" value="ECO:0007669"/>
    <property type="project" value="InterPro"/>
</dbReference>
<dbReference type="GO" id="GO:0006419">
    <property type="term" value="P:alanyl-tRNA aminoacylation"/>
    <property type="evidence" value="ECO:0007669"/>
    <property type="project" value="InterPro"/>
</dbReference>
<dbReference type="FunFam" id="2.40.30.130:FF:000010">
    <property type="entry name" value="Alanine--tRNA ligase"/>
    <property type="match status" value="1"/>
</dbReference>
<dbReference type="Gene3D" id="2.40.30.130">
    <property type="match status" value="1"/>
</dbReference>
<dbReference type="Gene3D" id="3.30.980.10">
    <property type="entry name" value="Threonyl-trna Synthetase, Chain A, domain 2"/>
    <property type="match status" value="1"/>
</dbReference>
<dbReference type="InterPro" id="IPR018165">
    <property type="entry name" value="Ala-tRNA-synth_IIc_core"/>
</dbReference>
<dbReference type="InterPro" id="IPR018164">
    <property type="entry name" value="Ala-tRNA-synth_IIc_N"/>
</dbReference>
<dbReference type="InterPro" id="IPR053424">
    <property type="entry name" value="Alanyl-tRNA_Edit-Domain"/>
</dbReference>
<dbReference type="InterPro" id="IPR051335">
    <property type="entry name" value="Alanyl-tRNA_Editing_Enzymes"/>
</dbReference>
<dbReference type="InterPro" id="IPR018163">
    <property type="entry name" value="Thr/Ala-tRNA-synth_IIc_edit"/>
</dbReference>
<dbReference type="InterPro" id="IPR009000">
    <property type="entry name" value="Transl_B-barrel_sf"/>
</dbReference>
<dbReference type="InterPro" id="IPR012947">
    <property type="entry name" value="tRNA_SAD"/>
</dbReference>
<dbReference type="NCBIfam" id="NF040865">
    <property type="entry name" value="a_tRNA_ed_AlaXM"/>
    <property type="match status" value="1"/>
</dbReference>
<dbReference type="PANTHER" id="PTHR43462">
    <property type="entry name" value="ALANYL-TRNA EDITING PROTEIN"/>
    <property type="match status" value="1"/>
</dbReference>
<dbReference type="PANTHER" id="PTHR43462:SF1">
    <property type="entry name" value="ALANYL-TRNA EDITING PROTEIN AARSD1"/>
    <property type="match status" value="1"/>
</dbReference>
<dbReference type="Pfam" id="PF01411">
    <property type="entry name" value="tRNA-synt_2c"/>
    <property type="match status" value="1"/>
</dbReference>
<dbReference type="Pfam" id="PF07973">
    <property type="entry name" value="tRNA_SAD"/>
    <property type="match status" value="1"/>
</dbReference>
<dbReference type="SMART" id="SM00863">
    <property type="entry name" value="tRNA_SAD"/>
    <property type="match status" value="1"/>
</dbReference>
<dbReference type="SUPFAM" id="SSF55186">
    <property type="entry name" value="ThrRS/AlaRS common domain"/>
    <property type="match status" value="1"/>
</dbReference>
<dbReference type="SUPFAM" id="SSF50447">
    <property type="entry name" value="Translation proteins"/>
    <property type="match status" value="1"/>
</dbReference>
<dbReference type="PROSITE" id="PS50860">
    <property type="entry name" value="AA_TRNA_LIGASE_II_ALA"/>
    <property type="match status" value="1"/>
</dbReference>
<comment type="function">
    <text evidence="2 3">Functions in trans to edit the amino acid moiety from mischarged Ser-tRNA(Ala). Recognition depends, at least in part, on the acceptor stem of tRNA(Ala).</text>
</comment>
<comment type="cofactor">
    <cofactor evidence="1">
        <name>Zn(2+)</name>
        <dbReference type="ChEBI" id="CHEBI:29105"/>
    </cofactor>
    <text evidence="1">Binds 1 zinc ion per subunit.</text>
</comment>
<comment type="subcellular location">
    <subcellularLocation>
        <location evidence="4">Cytoplasm</location>
    </subcellularLocation>
</comment>
<comment type="similarity">
    <text evidence="4">Belongs to the class-II aminoacyl-tRNA synthetase family. Editing domain AlaX-M subfamily.</text>
</comment>
<comment type="sequence caution" evidence="4">
    <conflict type="erroneous initiation">
        <sequence resource="EMBL-CDS" id="AAM29929"/>
    </conflict>
</comment>
<sequence length="251" mass="28203">MTEALYFLDCYLKEFEATVEKVTEGKYIVLDRTAFYPESGGQPSDTGKLVRERDGAEFKVVYAGKFNGDISHEISPEGETGAEGLKVGDKVKGIIDWDRRYRHMRMHTATHVIANVIEKEAGAQITGNQLGLDQSRVDFSLEAFDREKFAEYEKIANEIIAENHSVNLYLVSRKEAEERLSRLTTLAKGFSEEITEVRLVEIEGVTIEACGGSHLKNTGEIKGIKIEKLQNKGKSNRRMYFSLLDQASGLK</sequence>
<protein>
    <recommendedName>
        <fullName>Alanyl-tRNA editing protein AlaX-M</fullName>
        <shortName>AlaX-M</shortName>
        <shortName>AlaXp</shortName>
    </recommendedName>
    <alternativeName>
        <fullName>Alanyl-tRNA deacylase AlaX-M</fullName>
    </alternativeName>
</protein>
<reference key="1">
    <citation type="journal article" date="2002" name="J. Mol. Microbiol. Biotechnol.">
        <title>The genome of Methanosarcina mazei: evidence for lateral gene transfer between Bacteria and Archaea.</title>
        <authorList>
            <person name="Deppenmeier U."/>
            <person name="Johann A."/>
            <person name="Hartsch T."/>
            <person name="Merkl R."/>
            <person name="Schmitz R.A."/>
            <person name="Martinez-Arias R."/>
            <person name="Henne A."/>
            <person name="Wiezer A."/>
            <person name="Baeumer S."/>
            <person name="Jacobi C."/>
            <person name="Brueggemann H."/>
            <person name="Lienard T."/>
            <person name="Christmann A."/>
            <person name="Boemecke M."/>
            <person name="Steckel S."/>
            <person name="Bhattacharyya A."/>
            <person name="Lykidis A."/>
            <person name="Overbeek R."/>
            <person name="Klenk H.-P."/>
            <person name="Gunsalus R.P."/>
            <person name="Fritz H.-J."/>
            <person name="Gottschalk G."/>
        </authorList>
    </citation>
    <scope>NUCLEOTIDE SEQUENCE [LARGE SCALE GENOMIC DNA]</scope>
    <source>
        <strain>ATCC BAA-159 / DSM 3647 / Goe1 / Go1 / JCM 11833 / OCM 88</strain>
    </source>
</reference>
<reference key="2">
    <citation type="journal article" date="2008" name="J. Biol. Chem.">
        <title>Natural homolog of tRNA synthetase editing domain rescues conditional lethality caused by mistranslation.</title>
        <authorList>
            <person name="Chong Y.E."/>
            <person name="Yang X.L."/>
            <person name="Schimmel P."/>
        </authorList>
    </citation>
    <scope>FUNCTION IN EDITING DEFECTIVE E.COLI</scope>
    <scope>MUTAGENESIS OF LYS-232 AND LYS-234</scope>
    <source>
        <strain>ATCC BAA-159 / DSM 3647 / Goe1 / Go1 / JCM 11833 / OCM 88</strain>
    </source>
</reference>
<reference key="3">
    <citation type="journal article" date="2008" name="Nature">
        <title>Distinct domains of tRNA synthetase recognize the same base pair.</title>
        <authorList>
            <person name="Beebe K."/>
            <person name="Mock M."/>
            <person name="Merriman E."/>
            <person name="Schimmel P."/>
        </authorList>
    </citation>
    <scope>FUNCTION AS TRNA(ALA) EDITING PROTEIN</scope>
    <scope>MUTAGENESIS OF 232-LYS--LYS-234</scope>
    <source>
        <strain>ATCC BAA-159 / DSM 3647 / Goe1 / Go1 / JCM 11833 / OCM 88</strain>
    </source>
</reference>
<accession>Q8Q0A4</accession>